<comment type="function">
    <text evidence="1">RNA chaperone that binds small regulatory RNA (sRNAs) and mRNAs to facilitate mRNA translational regulation in response to envelope stress, environmental stress and changes in metabolite concentrations. Also binds with high specificity to tRNAs.</text>
</comment>
<comment type="subunit">
    <text evidence="1">Homohexamer.</text>
</comment>
<comment type="similarity">
    <text evidence="1">Belongs to the Hfq family.</text>
</comment>
<reference key="1">
    <citation type="journal article" date="2005" name="J. Bacteriol.">
        <title>Genomic sequence of an otitis media isolate of nontypeable Haemophilus influenzae: comparative study with H. influenzae serotype d, strain KW20.</title>
        <authorList>
            <person name="Harrison A."/>
            <person name="Dyer D.W."/>
            <person name="Gillaspy A."/>
            <person name="Ray W.C."/>
            <person name="Mungur R."/>
            <person name="Carson M.B."/>
            <person name="Zhong H."/>
            <person name="Gipson J."/>
            <person name="Gipson M."/>
            <person name="Johnson L.S."/>
            <person name="Lewis L."/>
            <person name="Bakaletz L.O."/>
            <person name="Munson R.S. Jr."/>
        </authorList>
    </citation>
    <scope>NUCLEOTIDE SEQUENCE [LARGE SCALE GENOMIC DNA]</scope>
    <source>
        <strain>86-028NP</strain>
    </source>
</reference>
<sequence>MAKGQSLQDPYLNALRRERIPVSIYLVNGIKLQGQIESFDQFVILLKNTVNQMVYKHAISTVVPARSVSHHNNNHHTTPTEAVENVETQAE</sequence>
<evidence type="ECO:0000255" key="1">
    <source>
        <dbReference type="HAMAP-Rule" id="MF_00436"/>
    </source>
</evidence>
<evidence type="ECO:0000255" key="2">
    <source>
        <dbReference type="PROSITE-ProRule" id="PRU01346"/>
    </source>
</evidence>
<evidence type="ECO:0000256" key="3">
    <source>
        <dbReference type="SAM" id="MobiDB-lite"/>
    </source>
</evidence>
<accession>Q4QND2</accession>
<keyword id="KW-0694">RNA-binding</keyword>
<keyword id="KW-0346">Stress response</keyword>
<organism>
    <name type="scientific">Haemophilus influenzae (strain 86-028NP)</name>
    <dbReference type="NCBI Taxonomy" id="281310"/>
    <lineage>
        <taxon>Bacteria</taxon>
        <taxon>Pseudomonadati</taxon>
        <taxon>Pseudomonadota</taxon>
        <taxon>Gammaproteobacteria</taxon>
        <taxon>Pasteurellales</taxon>
        <taxon>Pasteurellaceae</taxon>
        <taxon>Haemophilus</taxon>
    </lineage>
</organism>
<protein>
    <recommendedName>
        <fullName evidence="1">RNA-binding protein Hfq</fullName>
    </recommendedName>
</protein>
<gene>
    <name evidence="1" type="primary">hfq</name>
    <name type="ordered locus">NTHI0535</name>
</gene>
<name>HFQ_HAEI8</name>
<proteinExistence type="inferred from homology"/>
<feature type="chain" id="PRO_0000265160" description="RNA-binding protein Hfq">
    <location>
        <begin position="1"/>
        <end position="91"/>
    </location>
</feature>
<feature type="domain" description="Sm" evidence="2">
    <location>
        <begin position="9"/>
        <end position="68"/>
    </location>
</feature>
<feature type="region of interest" description="Disordered" evidence="3">
    <location>
        <begin position="68"/>
        <end position="91"/>
    </location>
</feature>
<dbReference type="EMBL" id="CP000057">
    <property type="protein sequence ID" value="AAX87465.1"/>
    <property type="molecule type" value="Genomic_DNA"/>
</dbReference>
<dbReference type="RefSeq" id="WP_005686877.1">
    <property type="nucleotide sequence ID" value="NC_007146.2"/>
</dbReference>
<dbReference type="SMR" id="Q4QND2"/>
<dbReference type="KEGG" id="hit:NTHI0535"/>
<dbReference type="HOGENOM" id="CLU_113688_2_2_6"/>
<dbReference type="Proteomes" id="UP000002525">
    <property type="component" value="Chromosome"/>
</dbReference>
<dbReference type="GO" id="GO:0005829">
    <property type="term" value="C:cytosol"/>
    <property type="evidence" value="ECO:0007669"/>
    <property type="project" value="TreeGrafter"/>
</dbReference>
<dbReference type="GO" id="GO:0003723">
    <property type="term" value="F:RNA binding"/>
    <property type="evidence" value="ECO:0007669"/>
    <property type="project" value="UniProtKB-UniRule"/>
</dbReference>
<dbReference type="GO" id="GO:0006355">
    <property type="term" value="P:regulation of DNA-templated transcription"/>
    <property type="evidence" value="ECO:0007669"/>
    <property type="project" value="InterPro"/>
</dbReference>
<dbReference type="GO" id="GO:0043487">
    <property type="term" value="P:regulation of RNA stability"/>
    <property type="evidence" value="ECO:0007669"/>
    <property type="project" value="TreeGrafter"/>
</dbReference>
<dbReference type="GO" id="GO:0045974">
    <property type="term" value="P:regulation of translation, ncRNA-mediated"/>
    <property type="evidence" value="ECO:0007669"/>
    <property type="project" value="TreeGrafter"/>
</dbReference>
<dbReference type="CDD" id="cd01716">
    <property type="entry name" value="Hfq"/>
    <property type="match status" value="1"/>
</dbReference>
<dbReference type="FunFam" id="2.30.30.100:FF:000001">
    <property type="entry name" value="RNA-binding protein Hfq"/>
    <property type="match status" value="1"/>
</dbReference>
<dbReference type="Gene3D" id="2.30.30.100">
    <property type="match status" value="1"/>
</dbReference>
<dbReference type="HAMAP" id="MF_00436">
    <property type="entry name" value="Hfq"/>
    <property type="match status" value="1"/>
</dbReference>
<dbReference type="InterPro" id="IPR005001">
    <property type="entry name" value="Hfq"/>
</dbReference>
<dbReference type="InterPro" id="IPR010920">
    <property type="entry name" value="LSM_dom_sf"/>
</dbReference>
<dbReference type="InterPro" id="IPR047575">
    <property type="entry name" value="Sm"/>
</dbReference>
<dbReference type="NCBIfam" id="TIGR02383">
    <property type="entry name" value="Hfq"/>
    <property type="match status" value="1"/>
</dbReference>
<dbReference type="NCBIfam" id="NF001602">
    <property type="entry name" value="PRK00395.1"/>
    <property type="match status" value="1"/>
</dbReference>
<dbReference type="PANTHER" id="PTHR34772">
    <property type="entry name" value="RNA-BINDING PROTEIN HFQ"/>
    <property type="match status" value="1"/>
</dbReference>
<dbReference type="PANTHER" id="PTHR34772:SF1">
    <property type="entry name" value="RNA-BINDING PROTEIN HFQ"/>
    <property type="match status" value="1"/>
</dbReference>
<dbReference type="Pfam" id="PF17209">
    <property type="entry name" value="Hfq"/>
    <property type="match status" value="1"/>
</dbReference>
<dbReference type="SUPFAM" id="SSF50182">
    <property type="entry name" value="Sm-like ribonucleoproteins"/>
    <property type="match status" value="1"/>
</dbReference>
<dbReference type="PROSITE" id="PS52002">
    <property type="entry name" value="SM"/>
    <property type="match status" value="1"/>
</dbReference>